<protein>
    <recommendedName>
        <fullName evidence="1">Chaperone protein DnaJ</fullName>
    </recommendedName>
</protein>
<dbReference type="EMBL" id="CP000967">
    <property type="protein sequence ID" value="ACD59504.1"/>
    <property type="molecule type" value="Genomic_DNA"/>
</dbReference>
<dbReference type="RefSeq" id="WP_011258743.1">
    <property type="nucleotide sequence ID" value="NC_010717.2"/>
</dbReference>
<dbReference type="SMR" id="B2SQU3"/>
<dbReference type="KEGG" id="xop:PXO_01186"/>
<dbReference type="eggNOG" id="COG0484">
    <property type="taxonomic scope" value="Bacteria"/>
</dbReference>
<dbReference type="HOGENOM" id="CLU_017633_0_7_6"/>
<dbReference type="Proteomes" id="UP000001740">
    <property type="component" value="Chromosome"/>
</dbReference>
<dbReference type="GO" id="GO:0005737">
    <property type="term" value="C:cytoplasm"/>
    <property type="evidence" value="ECO:0007669"/>
    <property type="project" value="UniProtKB-SubCell"/>
</dbReference>
<dbReference type="GO" id="GO:0005524">
    <property type="term" value="F:ATP binding"/>
    <property type="evidence" value="ECO:0007669"/>
    <property type="project" value="InterPro"/>
</dbReference>
<dbReference type="GO" id="GO:0031072">
    <property type="term" value="F:heat shock protein binding"/>
    <property type="evidence" value="ECO:0007669"/>
    <property type="project" value="InterPro"/>
</dbReference>
<dbReference type="GO" id="GO:0051082">
    <property type="term" value="F:unfolded protein binding"/>
    <property type="evidence" value="ECO:0007669"/>
    <property type="project" value="UniProtKB-UniRule"/>
</dbReference>
<dbReference type="GO" id="GO:0008270">
    <property type="term" value="F:zinc ion binding"/>
    <property type="evidence" value="ECO:0007669"/>
    <property type="project" value="UniProtKB-UniRule"/>
</dbReference>
<dbReference type="GO" id="GO:0051085">
    <property type="term" value="P:chaperone cofactor-dependent protein refolding"/>
    <property type="evidence" value="ECO:0007669"/>
    <property type="project" value="TreeGrafter"/>
</dbReference>
<dbReference type="GO" id="GO:0006260">
    <property type="term" value="P:DNA replication"/>
    <property type="evidence" value="ECO:0007669"/>
    <property type="project" value="UniProtKB-KW"/>
</dbReference>
<dbReference type="GO" id="GO:0042026">
    <property type="term" value="P:protein refolding"/>
    <property type="evidence" value="ECO:0007669"/>
    <property type="project" value="TreeGrafter"/>
</dbReference>
<dbReference type="GO" id="GO:0009408">
    <property type="term" value="P:response to heat"/>
    <property type="evidence" value="ECO:0007669"/>
    <property type="project" value="InterPro"/>
</dbReference>
<dbReference type="CDD" id="cd06257">
    <property type="entry name" value="DnaJ"/>
    <property type="match status" value="1"/>
</dbReference>
<dbReference type="CDD" id="cd10747">
    <property type="entry name" value="DnaJ_C"/>
    <property type="match status" value="1"/>
</dbReference>
<dbReference type="CDD" id="cd10719">
    <property type="entry name" value="DnaJ_zf"/>
    <property type="match status" value="1"/>
</dbReference>
<dbReference type="FunFam" id="1.10.287.110:FF:000099">
    <property type="entry name" value="Chaperone protein DnaJ"/>
    <property type="match status" value="1"/>
</dbReference>
<dbReference type="FunFam" id="2.10.230.10:FF:000002">
    <property type="entry name" value="Molecular chaperone DnaJ"/>
    <property type="match status" value="1"/>
</dbReference>
<dbReference type="FunFam" id="2.60.260.20:FF:000004">
    <property type="entry name" value="Molecular chaperone DnaJ"/>
    <property type="match status" value="1"/>
</dbReference>
<dbReference type="Gene3D" id="1.10.287.110">
    <property type="entry name" value="DnaJ domain"/>
    <property type="match status" value="1"/>
</dbReference>
<dbReference type="Gene3D" id="2.10.230.10">
    <property type="entry name" value="Heat shock protein DnaJ, cysteine-rich domain"/>
    <property type="match status" value="1"/>
</dbReference>
<dbReference type="Gene3D" id="2.60.260.20">
    <property type="entry name" value="Urease metallochaperone UreE, N-terminal domain"/>
    <property type="match status" value="2"/>
</dbReference>
<dbReference type="HAMAP" id="MF_01152">
    <property type="entry name" value="DnaJ"/>
    <property type="match status" value="1"/>
</dbReference>
<dbReference type="InterPro" id="IPR012724">
    <property type="entry name" value="DnaJ"/>
</dbReference>
<dbReference type="InterPro" id="IPR002939">
    <property type="entry name" value="DnaJ_C"/>
</dbReference>
<dbReference type="InterPro" id="IPR001623">
    <property type="entry name" value="DnaJ_domain"/>
</dbReference>
<dbReference type="InterPro" id="IPR008971">
    <property type="entry name" value="HSP40/DnaJ_pept-bd"/>
</dbReference>
<dbReference type="InterPro" id="IPR001305">
    <property type="entry name" value="HSP_DnaJ_Cys-rich_dom"/>
</dbReference>
<dbReference type="InterPro" id="IPR036410">
    <property type="entry name" value="HSP_DnaJ_Cys-rich_dom_sf"/>
</dbReference>
<dbReference type="InterPro" id="IPR036869">
    <property type="entry name" value="J_dom_sf"/>
</dbReference>
<dbReference type="NCBIfam" id="TIGR02349">
    <property type="entry name" value="DnaJ_bact"/>
    <property type="match status" value="1"/>
</dbReference>
<dbReference type="NCBIfam" id="NF008035">
    <property type="entry name" value="PRK10767.1"/>
    <property type="match status" value="1"/>
</dbReference>
<dbReference type="PANTHER" id="PTHR43096:SF48">
    <property type="entry name" value="CHAPERONE PROTEIN DNAJ"/>
    <property type="match status" value="1"/>
</dbReference>
<dbReference type="PANTHER" id="PTHR43096">
    <property type="entry name" value="DNAJ HOMOLOG 1, MITOCHONDRIAL-RELATED"/>
    <property type="match status" value="1"/>
</dbReference>
<dbReference type="Pfam" id="PF00226">
    <property type="entry name" value="DnaJ"/>
    <property type="match status" value="1"/>
</dbReference>
<dbReference type="Pfam" id="PF01556">
    <property type="entry name" value="DnaJ_C"/>
    <property type="match status" value="1"/>
</dbReference>
<dbReference type="Pfam" id="PF00684">
    <property type="entry name" value="DnaJ_CXXCXGXG"/>
    <property type="match status" value="1"/>
</dbReference>
<dbReference type="PRINTS" id="PR00625">
    <property type="entry name" value="JDOMAIN"/>
</dbReference>
<dbReference type="SMART" id="SM00271">
    <property type="entry name" value="DnaJ"/>
    <property type="match status" value="1"/>
</dbReference>
<dbReference type="SUPFAM" id="SSF46565">
    <property type="entry name" value="Chaperone J-domain"/>
    <property type="match status" value="1"/>
</dbReference>
<dbReference type="SUPFAM" id="SSF57938">
    <property type="entry name" value="DnaJ/Hsp40 cysteine-rich domain"/>
    <property type="match status" value="1"/>
</dbReference>
<dbReference type="SUPFAM" id="SSF49493">
    <property type="entry name" value="HSP40/DnaJ peptide-binding domain"/>
    <property type="match status" value="2"/>
</dbReference>
<dbReference type="PROSITE" id="PS50076">
    <property type="entry name" value="DNAJ_2"/>
    <property type="match status" value="1"/>
</dbReference>
<dbReference type="PROSITE" id="PS51188">
    <property type="entry name" value="ZF_CR"/>
    <property type="match status" value="1"/>
</dbReference>
<comment type="function">
    <text evidence="1">Participates actively in the response to hyperosmotic and heat shock by preventing the aggregation of stress-denatured proteins and by disaggregating proteins, also in an autonomous, DnaK-independent fashion. Unfolded proteins bind initially to DnaJ; upon interaction with the DnaJ-bound protein, DnaK hydrolyzes its bound ATP, resulting in the formation of a stable complex. GrpE releases ADP from DnaK; ATP binding to DnaK triggers the release of the substrate protein, thus completing the reaction cycle. Several rounds of ATP-dependent interactions between DnaJ, DnaK and GrpE are required for fully efficient folding. Also involved, together with DnaK and GrpE, in the DNA replication of plasmids through activation of initiation proteins.</text>
</comment>
<comment type="cofactor">
    <cofactor evidence="1">
        <name>Zn(2+)</name>
        <dbReference type="ChEBI" id="CHEBI:29105"/>
    </cofactor>
    <text evidence="1">Binds 2 Zn(2+) ions per monomer.</text>
</comment>
<comment type="subunit">
    <text evidence="1">Homodimer.</text>
</comment>
<comment type="subcellular location">
    <subcellularLocation>
        <location evidence="1">Cytoplasm</location>
    </subcellularLocation>
</comment>
<comment type="domain">
    <text evidence="1">The J domain is necessary and sufficient to stimulate DnaK ATPase activity. Zinc center 1 plays an important role in the autonomous, DnaK-independent chaperone activity of DnaJ. Zinc center 2 is essential for interaction with DnaK and for DnaJ activity.</text>
</comment>
<comment type="similarity">
    <text evidence="1">Belongs to the DnaJ family.</text>
</comment>
<evidence type="ECO:0000255" key="1">
    <source>
        <dbReference type="HAMAP-Rule" id="MF_01152"/>
    </source>
</evidence>
<reference key="1">
    <citation type="journal article" date="2008" name="BMC Genomics">
        <title>Genome sequence and rapid evolution of the rice pathogen Xanthomonas oryzae pv. oryzae PXO99A.</title>
        <authorList>
            <person name="Salzberg S.L."/>
            <person name="Sommer D.D."/>
            <person name="Schatz M.C."/>
            <person name="Phillippy A.M."/>
            <person name="Rabinowicz P.D."/>
            <person name="Tsuge S."/>
            <person name="Furutani A."/>
            <person name="Ochiai H."/>
            <person name="Delcher A.L."/>
            <person name="Kelley D."/>
            <person name="Madupu R."/>
            <person name="Puiu D."/>
            <person name="Radune D."/>
            <person name="Shumway M."/>
            <person name="Trapnell C."/>
            <person name="Aparna G."/>
            <person name="Jha G."/>
            <person name="Pandey A."/>
            <person name="Patil P.B."/>
            <person name="Ishihara H."/>
            <person name="Meyer D.F."/>
            <person name="Szurek B."/>
            <person name="Verdier V."/>
            <person name="Koebnik R."/>
            <person name="Dow J.M."/>
            <person name="Ryan R.P."/>
            <person name="Hirata H."/>
            <person name="Tsuyumu S."/>
            <person name="Won Lee S."/>
            <person name="Seo Y.-S."/>
            <person name="Sriariyanum M."/>
            <person name="Ronald P.C."/>
            <person name="Sonti R.V."/>
            <person name="Van Sluys M.-A."/>
            <person name="Leach J.E."/>
            <person name="White F.F."/>
            <person name="Bogdanove A.J."/>
        </authorList>
    </citation>
    <scope>NUCLEOTIDE SEQUENCE [LARGE SCALE GENOMIC DNA]</scope>
    <source>
        <strain>PXO99A</strain>
    </source>
</reference>
<organism>
    <name type="scientific">Xanthomonas oryzae pv. oryzae (strain PXO99A)</name>
    <dbReference type="NCBI Taxonomy" id="360094"/>
    <lineage>
        <taxon>Bacteria</taxon>
        <taxon>Pseudomonadati</taxon>
        <taxon>Pseudomonadota</taxon>
        <taxon>Gammaproteobacteria</taxon>
        <taxon>Lysobacterales</taxon>
        <taxon>Lysobacteraceae</taxon>
        <taxon>Xanthomonas</taxon>
    </lineage>
</organism>
<proteinExistence type="inferred from homology"/>
<sequence length="376" mass="40420">MSKRDYYEVLGVARGASDEELKKAYRRCAMKHHPDRNPGDAAAEAAFKECKEAYEVLSDGNKRRAYDAHGHAAFEHGMGGGGGGPGSPDMGDIFGDIFGNIFGGGAAGPRAARRGADVGYVLELDLEEAVAGIERRIEIPTLIECVSCHGSGSEDGKVQTCGTCHGRGQVRIQRGIFAMQQSCPHCDGRGTLIQNPCKTCHGAGRVEENKVLSIKVPAGVDTGDRIRLAGEGEAGPAGTPPGDLYVEVRVREHAIFQRDGDDLHCEVPIRISQAALGDTVRVATLGGEAEIRIPAETQTGKLFRLRGKGVRSVRSRSEGDLYCRVVVETPVNLTADQRELLQQFEATFTGEDARKHSPKSATFIDGVKGFWDRMTS</sequence>
<name>DNAJ_XANOP</name>
<gene>
    <name evidence="1" type="primary">dnaJ</name>
    <name type="ordered locus">PXO_01186</name>
</gene>
<accession>B2SQU3</accession>
<keyword id="KW-0143">Chaperone</keyword>
<keyword id="KW-0963">Cytoplasm</keyword>
<keyword id="KW-0235">DNA replication</keyword>
<keyword id="KW-0479">Metal-binding</keyword>
<keyword id="KW-0677">Repeat</keyword>
<keyword id="KW-0346">Stress response</keyword>
<keyword id="KW-0862">Zinc</keyword>
<keyword id="KW-0863">Zinc-finger</keyword>
<feature type="chain" id="PRO_1000137738" description="Chaperone protein DnaJ">
    <location>
        <begin position="1"/>
        <end position="376"/>
    </location>
</feature>
<feature type="domain" description="J" evidence="1">
    <location>
        <begin position="5"/>
        <end position="70"/>
    </location>
</feature>
<feature type="repeat" description="CXXCXGXG motif">
    <location>
        <begin position="145"/>
        <end position="152"/>
    </location>
</feature>
<feature type="repeat" description="CXXCXGXG motif">
    <location>
        <begin position="161"/>
        <end position="168"/>
    </location>
</feature>
<feature type="repeat" description="CXXCXGXG motif">
    <location>
        <begin position="183"/>
        <end position="190"/>
    </location>
</feature>
<feature type="repeat" description="CXXCXGXG motif">
    <location>
        <begin position="197"/>
        <end position="204"/>
    </location>
</feature>
<feature type="zinc finger region" description="CR-type" evidence="1">
    <location>
        <begin position="132"/>
        <end position="209"/>
    </location>
</feature>
<feature type="binding site" evidence="1">
    <location>
        <position position="145"/>
    </location>
    <ligand>
        <name>Zn(2+)</name>
        <dbReference type="ChEBI" id="CHEBI:29105"/>
        <label>1</label>
    </ligand>
</feature>
<feature type="binding site" evidence="1">
    <location>
        <position position="148"/>
    </location>
    <ligand>
        <name>Zn(2+)</name>
        <dbReference type="ChEBI" id="CHEBI:29105"/>
        <label>1</label>
    </ligand>
</feature>
<feature type="binding site" evidence="1">
    <location>
        <position position="161"/>
    </location>
    <ligand>
        <name>Zn(2+)</name>
        <dbReference type="ChEBI" id="CHEBI:29105"/>
        <label>2</label>
    </ligand>
</feature>
<feature type="binding site" evidence="1">
    <location>
        <position position="164"/>
    </location>
    <ligand>
        <name>Zn(2+)</name>
        <dbReference type="ChEBI" id="CHEBI:29105"/>
        <label>2</label>
    </ligand>
</feature>
<feature type="binding site" evidence="1">
    <location>
        <position position="183"/>
    </location>
    <ligand>
        <name>Zn(2+)</name>
        <dbReference type="ChEBI" id="CHEBI:29105"/>
        <label>2</label>
    </ligand>
</feature>
<feature type="binding site" evidence="1">
    <location>
        <position position="186"/>
    </location>
    <ligand>
        <name>Zn(2+)</name>
        <dbReference type="ChEBI" id="CHEBI:29105"/>
        <label>2</label>
    </ligand>
</feature>
<feature type="binding site" evidence="1">
    <location>
        <position position="197"/>
    </location>
    <ligand>
        <name>Zn(2+)</name>
        <dbReference type="ChEBI" id="CHEBI:29105"/>
        <label>1</label>
    </ligand>
</feature>
<feature type="binding site" evidence="1">
    <location>
        <position position="200"/>
    </location>
    <ligand>
        <name>Zn(2+)</name>
        <dbReference type="ChEBI" id="CHEBI:29105"/>
        <label>1</label>
    </ligand>
</feature>